<name>TBB5_WHEAT</name>
<reference key="1">
    <citation type="submission" date="1996-11" db="EMBL/GenBank/DDBJ databases">
        <title>Tubb5, a beta-tubulin cDNA from common wheat.</title>
        <authorList>
            <person name="Segal G."/>
            <person name="Feldman M."/>
        </authorList>
    </citation>
    <scope>NUCLEOTIDE SEQUENCE [MRNA]</scope>
    <source>
        <strain>cv. Chinese Spring</strain>
        <tissue>Endosperm</tissue>
    </source>
</reference>
<protein>
    <recommendedName>
        <fullName>Tubulin beta-5 chain</fullName>
    </recommendedName>
    <alternativeName>
        <fullName>Beta-5-tubulin</fullName>
    </alternativeName>
</protein>
<accession>Q9ZRA8</accession>
<proteinExistence type="evidence at transcript level"/>
<evidence type="ECO:0000250" key="1">
    <source>
        <dbReference type="UniProtKB" id="P68363"/>
    </source>
</evidence>
<evidence type="ECO:0000250" key="2">
    <source>
        <dbReference type="UniProtKB" id="Q13509"/>
    </source>
</evidence>
<evidence type="ECO:0000305" key="3"/>
<dbReference type="EMBL" id="U76896">
    <property type="protein sequence ID" value="AAD10492.1"/>
    <property type="molecule type" value="mRNA"/>
</dbReference>
<dbReference type="SMR" id="Q9ZRA8"/>
<dbReference type="STRING" id="4565.Q9ZRA8"/>
<dbReference type="PaxDb" id="4565-Traes_1AL_E8C262A2A.2"/>
<dbReference type="EnsemblPlants" id="TraesARI1A03G00137820.1">
    <property type="protein sequence ID" value="TraesARI1A03G00137820.1"/>
    <property type="gene ID" value="TraesARI1A03G00137820"/>
</dbReference>
<dbReference type="EnsemblPlants" id="TraesARI1A03G00137820.2">
    <property type="protein sequence ID" value="TraesARI1A03G00137820.2"/>
    <property type="gene ID" value="TraesARI1A03G00137820"/>
</dbReference>
<dbReference type="EnsemblPlants" id="TraesARI1B03G00344270.1">
    <property type="protein sequence ID" value="TraesARI1B03G00344270.1"/>
    <property type="gene ID" value="TraesARI1B03G00344270"/>
</dbReference>
<dbReference type="EnsemblPlants" id="TraesARI1D03G00536750.1">
    <property type="protein sequence ID" value="TraesARI1D03G00536750.1"/>
    <property type="gene ID" value="TraesARI1D03G00536750"/>
</dbReference>
<dbReference type="EnsemblPlants" id="TraesCAD_scaffold_009571_01G000400.1">
    <property type="protein sequence ID" value="TraesCAD_scaffold_009571_01G000400.1"/>
    <property type="gene ID" value="TraesCAD_scaffold_009571_01G000400"/>
</dbReference>
<dbReference type="EnsemblPlants" id="TraesCAD_scaffold_020194_01G000200.1">
    <property type="protein sequence ID" value="TraesCAD_scaffold_020194_01G000200.1"/>
    <property type="gene ID" value="TraesCAD_scaffold_020194_01G000200"/>
</dbReference>
<dbReference type="EnsemblPlants" id="TraesCAD_scaffold_105298_01G000200.1">
    <property type="protein sequence ID" value="TraesCAD_scaffold_105298_01G000200.1"/>
    <property type="gene ID" value="TraesCAD_scaffold_105298_01G000200"/>
</dbReference>
<dbReference type="EnsemblPlants" id="TraesCLE_scaffold_017575_01G000200.1">
    <property type="protein sequence ID" value="TraesCLE_scaffold_017575_01G000200.1"/>
    <property type="gene ID" value="TraesCLE_scaffold_017575_01G000200"/>
</dbReference>
<dbReference type="EnsemblPlants" id="TraesCLE_scaffold_103357_01G000100.1">
    <property type="protein sequence ID" value="TraesCLE_scaffold_103357_01G000100.1"/>
    <property type="gene ID" value="TraesCLE_scaffold_103357_01G000100"/>
</dbReference>
<dbReference type="EnsemblPlants" id="TraesCLE_scaffold_127074_01G000200.1">
    <property type="protein sequence ID" value="TraesCLE_scaffold_127074_01G000200.1"/>
    <property type="gene ID" value="TraesCLE_scaffold_127074_01G000200"/>
</dbReference>
<dbReference type="EnsemblPlants" id="TraesCS1A02G309700.1">
    <property type="protein sequence ID" value="TraesCS1A02G309700.1"/>
    <property type="gene ID" value="TraesCS1A02G309700"/>
</dbReference>
<dbReference type="EnsemblPlants" id="TraesCS1A03G0768600.1">
    <property type="protein sequence ID" value="TraesCS1A03G0768600.1.CDS"/>
    <property type="gene ID" value="TraesCS1A03G0768600"/>
</dbReference>
<dbReference type="EnsemblPlants" id="TraesCS1B02G320800.1">
    <property type="protein sequence ID" value="TraesCS1B02G320800.1"/>
    <property type="gene ID" value="TraesCS1B02G320800"/>
</dbReference>
<dbReference type="EnsemblPlants" id="TraesCS1B03G0879400.1">
    <property type="protein sequence ID" value="TraesCS1B03G0879400.1.CDS"/>
    <property type="gene ID" value="TraesCS1B03G0879400"/>
</dbReference>
<dbReference type="EnsemblPlants" id="TraesCS1D02G309200.1">
    <property type="protein sequence ID" value="TraesCS1D02G309200.1"/>
    <property type="gene ID" value="TraesCS1D02G309200"/>
</dbReference>
<dbReference type="EnsemblPlants" id="TraesCS1D03G0735500.1">
    <property type="protein sequence ID" value="TraesCS1D03G0735500.1.CDS"/>
    <property type="gene ID" value="TraesCS1D03G0735500"/>
</dbReference>
<dbReference type="EnsemblPlants" id="TraesJAG1A03G00135500.1">
    <property type="protein sequence ID" value="TraesJAG1A03G00135500.1"/>
    <property type="gene ID" value="TraesJAG1A03G00135500"/>
</dbReference>
<dbReference type="EnsemblPlants" id="TraesJAG1A03G00135500.2">
    <property type="protein sequence ID" value="TraesJAG1A03G00135500.2"/>
    <property type="gene ID" value="TraesJAG1A03G00135500"/>
</dbReference>
<dbReference type="EnsemblPlants" id="TraesJAG1B03G00340700.1">
    <property type="protein sequence ID" value="TraesJAG1B03G00340700.1"/>
    <property type="gene ID" value="TraesJAG1B03G00340700"/>
</dbReference>
<dbReference type="EnsemblPlants" id="TraesJAG1D03G00530410.1">
    <property type="protein sequence ID" value="TraesJAG1D03G00530410.1"/>
    <property type="gene ID" value="TraesJAG1D03G00530410"/>
</dbReference>
<dbReference type="EnsemblPlants" id="TraesJUL1A03G00135690.1">
    <property type="protein sequence ID" value="TraesJUL1A03G00135690.1"/>
    <property type="gene ID" value="TraesJUL1A03G00135690"/>
</dbReference>
<dbReference type="EnsemblPlants" id="TraesJUL1B03G00341390.1">
    <property type="protein sequence ID" value="TraesJUL1B03G00341390.1"/>
    <property type="gene ID" value="TraesJUL1B03G00341390"/>
</dbReference>
<dbReference type="EnsemblPlants" id="TraesJUL1D03G00533730.1">
    <property type="protein sequence ID" value="TraesJUL1D03G00533730.1"/>
    <property type="gene ID" value="TraesJUL1D03G00533730"/>
</dbReference>
<dbReference type="EnsemblPlants" id="TraesKAR1A01G0314390.1">
    <property type="protein sequence ID" value="cds.TraesKAR1A01G0314390.1"/>
    <property type="gene ID" value="TraesKAR1A01G0314390"/>
</dbReference>
<dbReference type="EnsemblPlants" id="TraesKAR1B01G0358040.1">
    <property type="protein sequence ID" value="cds.TraesKAR1B01G0358040.1"/>
    <property type="gene ID" value="TraesKAR1B01G0358040"/>
</dbReference>
<dbReference type="EnsemblPlants" id="TraesKAR1D01G0292390.1">
    <property type="protein sequence ID" value="cds.TraesKAR1D01G0292390.1"/>
    <property type="gene ID" value="TraesKAR1D01G0292390"/>
</dbReference>
<dbReference type="EnsemblPlants" id="TraesLAC1A03G00138670.1">
    <property type="protein sequence ID" value="TraesLAC1A03G00138670.1"/>
    <property type="gene ID" value="TraesLAC1A03G00138670"/>
</dbReference>
<dbReference type="EnsemblPlants" id="TraesLAC1B03G00343930.1">
    <property type="protein sequence ID" value="TraesLAC1B03G00343930.1"/>
    <property type="gene ID" value="TraesLAC1B03G00343930"/>
</dbReference>
<dbReference type="EnsemblPlants" id="TraesLAC1D03G00534090.1">
    <property type="protein sequence ID" value="TraesLAC1D03G00534090.1"/>
    <property type="gene ID" value="TraesLAC1D03G00534090"/>
</dbReference>
<dbReference type="EnsemblPlants" id="TraesLDM1A03G00135910.1">
    <property type="protein sequence ID" value="TraesLDM1A03G00135910.1"/>
    <property type="gene ID" value="TraesLDM1A03G00135910"/>
</dbReference>
<dbReference type="EnsemblPlants" id="TraesLDM1B03G00341470.1">
    <property type="protein sequence ID" value="TraesLDM1B03G00341470.1"/>
    <property type="gene ID" value="TraesLDM1B03G00341470"/>
</dbReference>
<dbReference type="EnsemblPlants" id="TraesLDM1B03G00341470.2">
    <property type="protein sequence ID" value="TraesLDM1B03G00341470.2"/>
    <property type="gene ID" value="TraesLDM1B03G00341470"/>
</dbReference>
<dbReference type="EnsemblPlants" id="TraesLDM1D03G00533360.1">
    <property type="protein sequence ID" value="TraesLDM1D03G00533360.1"/>
    <property type="gene ID" value="TraesLDM1D03G00533360"/>
</dbReference>
<dbReference type="EnsemblPlants" id="TraesMAC1A03G00137230.1">
    <property type="protein sequence ID" value="TraesMAC1A03G00137230.1"/>
    <property type="gene ID" value="TraesMAC1A03G00137230"/>
</dbReference>
<dbReference type="EnsemblPlants" id="TraesMAC1B03G00343140.1">
    <property type="protein sequence ID" value="TraesMAC1B03G00343140.1"/>
    <property type="gene ID" value="TraesMAC1B03G00343140"/>
</dbReference>
<dbReference type="EnsemblPlants" id="TraesMAC1D03G00530120.1">
    <property type="protein sequence ID" value="TraesMAC1D03G00530120.1"/>
    <property type="gene ID" value="TraesMAC1D03G00530120"/>
</dbReference>
<dbReference type="EnsemblPlants" id="TraesNOR1A03G00136870.1">
    <property type="protein sequence ID" value="TraesNOR1A03G00136870.1"/>
    <property type="gene ID" value="TraesNOR1A03G00136870"/>
</dbReference>
<dbReference type="EnsemblPlants" id="TraesNOR1B03G00345170.1">
    <property type="protein sequence ID" value="TraesNOR1B03G00345170.1"/>
    <property type="gene ID" value="TraesNOR1B03G00345170"/>
</dbReference>
<dbReference type="EnsemblPlants" id="TraesNOR1D03G00538690.1">
    <property type="protein sequence ID" value="TraesNOR1D03G00538690.1"/>
    <property type="gene ID" value="TraesNOR1D03G00538690"/>
</dbReference>
<dbReference type="EnsemblPlants" id="TraesPARA_EIv1.0_0030410.3">
    <property type="protein sequence ID" value="TraesPARA_EIv1.0_0030410.3.CDS"/>
    <property type="gene ID" value="TraesPARA_EIv1.0_0030410"/>
</dbReference>
<dbReference type="EnsemblPlants" id="TraesPARA_EIv1.0_0030410.4">
    <property type="protein sequence ID" value="TraesPARA_EIv1.0_0030410.4.CDS"/>
    <property type="gene ID" value="TraesPARA_EIv1.0_0030410"/>
</dbReference>
<dbReference type="EnsemblPlants" id="TraesPARA_EIv1.0_0187060.1">
    <property type="protein sequence ID" value="TraesPARA_EIv1.0_0187060.1.CDS"/>
    <property type="gene ID" value="TraesPARA_EIv1.0_0187060"/>
</dbReference>
<dbReference type="EnsemblPlants" id="TraesPARA_EIv1.0_0187060.2">
    <property type="protein sequence ID" value="TraesPARA_EIv1.0_0187060.2.CDS"/>
    <property type="gene ID" value="TraesPARA_EIv1.0_0187060"/>
</dbReference>
<dbReference type="EnsemblPlants" id="TraesPARA_EIv1.0_0299380.1">
    <property type="protein sequence ID" value="TraesPARA_EIv1.0_0299380.1.CDS"/>
    <property type="gene ID" value="TraesPARA_EIv1.0_0299380"/>
</dbReference>
<dbReference type="EnsemblPlants" id="TraesROB_scaffold_023685_01G000400.1">
    <property type="protein sequence ID" value="TraesROB_scaffold_023685_01G000400.1"/>
    <property type="gene ID" value="TraesROB_scaffold_023685_01G000400"/>
</dbReference>
<dbReference type="EnsemblPlants" id="TraesROB_scaffold_042006_01G000100.1">
    <property type="protein sequence ID" value="TraesROB_scaffold_042006_01G000100.1"/>
    <property type="gene ID" value="TraesROB_scaffold_042006_01G000100"/>
</dbReference>
<dbReference type="EnsemblPlants" id="TraesROB_scaffold_100911_01G000100.1">
    <property type="protein sequence ID" value="TraesROB_scaffold_100911_01G000100.1"/>
    <property type="gene ID" value="TraesROB_scaffold_100911_01G000100"/>
</dbReference>
<dbReference type="EnsemblPlants" id="TraesSTA1A03G00136390.1">
    <property type="protein sequence ID" value="TraesSTA1A03G00136390.1"/>
    <property type="gene ID" value="TraesSTA1A03G00136390"/>
</dbReference>
<dbReference type="EnsemblPlants" id="TraesSTA1B03G00340100.1">
    <property type="protein sequence ID" value="TraesSTA1B03G00340100.1"/>
    <property type="gene ID" value="TraesSTA1B03G00340100"/>
</dbReference>
<dbReference type="EnsemblPlants" id="TraesSTA1D03G00529750.1">
    <property type="protein sequence ID" value="TraesSTA1D03G00529750.1"/>
    <property type="gene ID" value="TraesSTA1D03G00529750"/>
</dbReference>
<dbReference type="EnsemblPlants" id="TraesSYM1A03G00139360.1">
    <property type="protein sequence ID" value="TraesSYM1A03G00139360.1"/>
    <property type="gene ID" value="TraesSYM1A03G00139360"/>
</dbReference>
<dbReference type="EnsemblPlants" id="TraesSYM1A03G00139360.2">
    <property type="protein sequence ID" value="TraesSYM1A03G00139360.2"/>
    <property type="gene ID" value="TraesSYM1A03G00139360"/>
</dbReference>
<dbReference type="EnsemblPlants" id="TraesSYM1B03G00348430.1">
    <property type="protein sequence ID" value="TraesSYM1B03G00348430.1"/>
    <property type="gene ID" value="TraesSYM1B03G00348430"/>
</dbReference>
<dbReference type="EnsemblPlants" id="TraesSYM1D03G00537540.1">
    <property type="protein sequence ID" value="TraesSYM1D03G00537540.1"/>
    <property type="gene ID" value="TraesSYM1D03G00537540"/>
</dbReference>
<dbReference type="EnsemblPlants" id="TraesWEE_scaffold_007631_01G000200.1">
    <property type="protein sequence ID" value="TraesWEE_scaffold_007631_01G000200.1"/>
    <property type="gene ID" value="TraesWEE_scaffold_007631_01G000200"/>
</dbReference>
<dbReference type="EnsemblPlants" id="TraesWEE_scaffold_098495_01G000200.1">
    <property type="protein sequence ID" value="TraesWEE_scaffold_098495_01G000200.1"/>
    <property type="gene ID" value="TraesWEE_scaffold_098495_01G000200"/>
</dbReference>
<dbReference type="EnsemblPlants" id="TraesWEE_scaffold_119188_01G000100.1">
    <property type="protein sequence ID" value="TraesWEE_scaffold_119188_01G000100.1"/>
    <property type="gene ID" value="TraesWEE_scaffold_119188_01G000100"/>
</dbReference>
<dbReference type="Gramene" id="TraesARI1A03G00137820.1">
    <property type="protein sequence ID" value="TraesARI1A03G00137820.1"/>
    <property type="gene ID" value="TraesARI1A03G00137820"/>
</dbReference>
<dbReference type="Gramene" id="TraesARI1A03G00137820.2">
    <property type="protein sequence ID" value="TraesARI1A03G00137820.2"/>
    <property type="gene ID" value="TraesARI1A03G00137820"/>
</dbReference>
<dbReference type="Gramene" id="TraesARI1B03G00344270.1">
    <property type="protein sequence ID" value="TraesARI1B03G00344270.1"/>
    <property type="gene ID" value="TraesARI1B03G00344270"/>
</dbReference>
<dbReference type="Gramene" id="TraesARI1D03G00536750.1">
    <property type="protein sequence ID" value="TraesARI1D03G00536750.1"/>
    <property type="gene ID" value="TraesARI1D03G00536750"/>
</dbReference>
<dbReference type="Gramene" id="TraesCAD_scaffold_009571_01G000400.1">
    <property type="protein sequence ID" value="TraesCAD_scaffold_009571_01G000400.1"/>
    <property type="gene ID" value="TraesCAD_scaffold_009571_01G000400"/>
</dbReference>
<dbReference type="Gramene" id="TraesCAD_scaffold_020194_01G000200.1">
    <property type="protein sequence ID" value="TraesCAD_scaffold_020194_01G000200.1"/>
    <property type="gene ID" value="TraesCAD_scaffold_020194_01G000200"/>
</dbReference>
<dbReference type="Gramene" id="TraesCAD_scaffold_105298_01G000200.1">
    <property type="protein sequence ID" value="TraesCAD_scaffold_105298_01G000200.1"/>
    <property type="gene ID" value="TraesCAD_scaffold_105298_01G000200"/>
</dbReference>
<dbReference type="Gramene" id="TraesCLE_scaffold_017575_01G000200.1">
    <property type="protein sequence ID" value="TraesCLE_scaffold_017575_01G000200.1"/>
    <property type="gene ID" value="TraesCLE_scaffold_017575_01G000200"/>
</dbReference>
<dbReference type="Gramene" id="TraesCLE_scaffold_103357_01G000100.1">
    <property type="protein sequence ID" value="TraesCLE_scaffold_103357_01G000100.1"/>
    <property type="gene ID" value="TraesCLE_scaffold_103357_01G000100"/>
</dbReference>
<dbReference type="Gramene" id="TraesCLE_scaffold_127074_01G000200.1">
    <property type="protein sequence ID" value="TraesCLE_scaffold_127074_01G000200.1"/>
    <property type="gene ID" value="TraesCLE_scaffold_127074_01G000200"/>
</dbReference>
<dbReference type="Gramene" id="TraesCS1A02G309700.1">
    <property type="protein sequence ID" value="TraesCS1A02G309700.1"/>
    <property type="gene ID" value="TraesCS1A02G309700"/>
</dbReference>
<dbReference type="Gramene" id="TraesCS1A03G0768600.1">
    <property type="protein sequence ID" value="TraesCS1A03G0768600.1.CDS"/>
    <property type="gene ID" value="TraesCS1A03G0768600"/>
</dbReference>
<dbReference type="Gramene" id="TraesCS1B02G320800.1">
    <property type="protein sequence ID" value="TraesCS1B02G320800.1"/>
    <property type="gene ID" value="TraesCS1B02G320800"/>
</dbReference>
<dbReference type="Gramene" id="TraesCS1B03G0879400.1">
    <property type="protein sequence ID" value="TraesCS1B03G0879400.1.CDS"/>
    <property type="gene ID" value="TraesCS1B03G0879400"/>
</dbReference>
<dbReference type="Gramene" id="TraesCS1D02G309200.1">
    <property type="protein sequence ID" value="TraesCS1D02G309200.1"/>
    <property type="gene ID" value="TraesCS1D02G309200"/>
</dbReference>
<dbReference type="Gramene" id="TraesCS1D03G0735500.1">
    <property type="protein sequence ID" value="TraesCS1D03G0735500.1.CDS"/>
    <property type="gene ID" value="TraesCS1D03G0735500"/>
</dbReference>
<dbReference type="Gramene" id="TraesJAG1A03G00135500.1">
    <property type="protein sequence ID" value="TraesJAG1A03G00135500.1"/>
    <property type="gene ID" value="TraesJAG1A03G00135500"/>
</dbReference>
<dbReference type="Gramene" id="TraesJAG1A03G00135500.2">
    <property type="protein sequence ID" value="TraesJAG1A03G00135500.2"/>
    <property type="gene ID" value="TraesJAG1A03G00135500"/>
</dbReference>
<dbReference type="Gramene" id="TraesJAG1B03G00340700.1">
    <property type="protein sequence ID" value="TraesJAG1B03G00340700.1"/>
    <property type="gene ID" value="TraesJAG1B03G00340700"/>
</dbReference>
<dbReference type="Gramene" id="TraesJAG1D03G00530410.1">
    <property type="protein sequence ID" value="TraesJAG1D03G00530410.1"/>
    <property type="gene ID" value="TraesJAG1D03G00530410"/>
</dbReference>
<dbReference type="Gramene" id="TraesJUL1A03G00135690.1">
    <property type="protein sequence ID" value="TraesJUL1A03G00135690.1"/>
    <property type="gene ID" value="TraesJUL1A03G00135690"/>
</dbReference>
<dbReference type="Gramene" id="TraesJUL1B03G00341390.1">
    <property type="protein sequence ID" value="TraesJUL1B03G00341390.1"/>
    <property type="gene ID" value="TraesJUL1B03G00341390"/>
</dbReference>
<dbReference type="Gramene" id="TraesJUL1D03G00533730.1">
    <property type="protein sequence ID" value="TraesJUL1D03G00533730.1"/>
    <property type="gene ID" value="TraesJUL1D03G00533730"/>
</dbReference>
<dbReference type="Gramene" id="TraesKAR1A01G0314390.1">
    <property type="protein sequence ID" value="cds.TraesKAR1A01G0314390.1"/>
    <property type="gene ID" value="TraesKAR1A01G0314390"/>
</dbReference>
<dbReference type="Gramene" id="TraesKAR1B01G0358040.1">
    <property type="protein sequence ID" value="cds.TraesKAR1B01G0358040.1"/>
    <property type="gene ID" value="TraesKAR1B01G0358040"/>
</dbReference>
<dbReference type="Gramene" id="TraesKAR1D01G0292390.1">
    <property type="protein sequence ID" value="cds.TraesKAR1D01G0292390.1"/>
    <property type="gene ID" value="TraesKAR1D01G0292390"/>
</dbReference>
<dbReference type="Gramene" id="TraesLAC1A03G00138670.1">
    <property type="protein sequence ID" value="TraesLAC1A03G00138670.1"/>
    <property type="gene ID" value="TraesLAC1A03G00138670"/>
</dbReference>
<dbReference type="Gramene" id="TraesLAC1B03G00343930.1">
    <property type="protein sequence ID" value="TraesLAC1B03G00343930.1"/>
    <property type="gene ID" value="TraesLAC1B03G00343930"/>
</dbReference>
<dbReference type="Gramene" id="TraesLAC1D03G00534090.1">
    <property type="protein sequence ID" value="TraesLAC1D03G00534090.1"/>
    <property type="gene ID" value="TraesLAC1D03G00534090"/>
</dbReference>
<dbReference type="Gramene" id="TraesLDM1A03G00135910.1">
    <property type="protein sequence ID" value="TraesLDM1A03G00135910.1"/>
    <property type="gene ID" value="TraesLDM1A03G00135910"/>
</dbReference>
<dbReference type="Gramene" id="TraesLDM1B03G00341470.1">
    <property type="protein sequence ID" value="TraesLDM1B03G00341470.1"/>
    <property type="gene ID" value="TraesLDM1B03G00341470"/>
</dbReference>
<dbReference type="Gramene" id="TraesLDM1B03G00341470.2">
    <property type="protein sequence ID" value="TraesLDM1B03G00341470.2"/>
    <property type="gene ID" value="TraesLDM1B03G00341470"/>
</dbReference>
<dbReference type="Gramene" id="TraesLDM1D03G00533360.1">
    <property type="protein sequence ID" value="TraesLDM1D03G00533360.1"/>
    <property type="gene ID" value="TraesLDM1D03G00533360"/>
</dbReference>
<dbReference type="Gramene" id="TraesMAC1A03G00137230.1">
    <property type="protein sequence ID" value="TraesMAC1A03G00137230.1"/>
    <property type="gene ID" value="TraesMAC1A03G00137230"/>
</dbReference>
<dbReference type="Gramene" id="TraesMAC1B03G00343140.1">
    <property type="protein sequence ID" value="TraesMAC1B03G00343140.1"/>
    <property type="gene ID" value="TraesMAC1B03G00343140"/>
</dbReference>
<dbReference type="Gramene" id="TraesMAC1D03G00530120.1">
    <property type="protein sequence ID" value="TraesMAC1D03G00530120.1"/>
    <property type="gene ID" value="TraesMAC1D03G00530120"/>
</dbReference>
<dbReference type="Gramene" id="TraesNOR1A03G00136870.1">
    <property type="protein sequence ID" value="TraesNOR1A03G00136870.1"/>
    <property type="gene ID" value="TraesNOR1A03G00136870"/>
</dbReference>
<dbReference type="Gramene" id="TraesNOR1B03G00345170.1">
    <property type="protein sequence ID" value="TraesNOR1B03G00345170.1"/>
    <property type="gene ID" value="TraesNOR1B03G00345170"/>
</dbReference>
<dbReference type="Gramene" id="TraesNOR1D03G00538690.1">
    <property type="protein sequence ID" value="TraesNOR1D03G00538690.1"/>
    <property type="gene ID" value="TraesNOR1D03G00538690"/>
</dbReference>
<dbReference type="Gramene" id="TraesPARA_EIv1.0_0030410.3">
    <property type="protein sequence ID" value="TraesPARA_EIv1.0_0030410.3.CDS"/>
    <property type="gene ID" value="TraesPARA_EIv1.0_0030410"/>
</dbReference>
<dbReference type="Gramene" id="TraesPARA_EIv1.0_0030410.4">
    <property type="protein sequence ID" value="TraesPARA_EIv1.0_0030410.4.CDS"/>
    <property type="gene ID" value="TraesPARA_EIv1.0_0030410"/>
</dbReference>
<dbReference type="Gramene" id="TraesPARA_EIv1.0_0187060.1">
    <property type="protein sequence ID" value="TraesPARA_EIv1.0_0187060.1.CDS"/>
    <property type="gene ID" value="TraesPARA_EIv1.0_0187060"/>
</dbReference>
<dbReference type="Gramene" id="TraesPARA_EIv1.0_0187060.2">
    <property type="protein sequence ID" value="TraesPARA_EIv1.0_0187060.2.CDS"/>
    <property type="gene ID" value="TraesPARA_EIv1.0_0187060"/>
</dbReference>
<dbReference type="Gramene" id="TraesPARA_EIv1.0_0299380.1">
    <property type="protein sequence ID" value="TraesPARA_EIv1.0_0299380.1.CDS"/>
    <property type="gene ID" value="TraesPARA_EIv1.0_0299380"/>
</dbReference>
<dbReference type="Gramene" id="TraesROB_scaffold_023685_01G000400.1">
    <property type="protein sequence ID" value="TraesROB_scaffold_023685_01G000400.1"/>
    <property type="gene ID" value="TraesROB_scaffold_023685_01G000400"/>
</dbReference>
<dbReference type="Gramene" id="TraesROB_scaffold_042006_01G000100.1">
    <property type="protein sequence ID" value="TraesROB_scaffold_042006_01G000100.1"/>
    <property type="gene ID" value="TraesROB_scaffold_042006_01G000100"/>
</dbReference>
<dbReference type="Gramene" id="TraesROB_scaffold_100911_01G000100.1">
    <property type="protein sequence ID" value="TraesROB_scaffold_100911_01G000100.1"/>
    <property type="gene ID" value="TraesROB_scaffold_100911_01G000100"/>
</dbReference>
<dbReference type="Gramene" id="TraesSTA1A03G00136390.1">
    <property type="protein sequence ID" value="TraesSTA1A03G00136390.1"/>
    <property type="gene ID" value="TraesSTA1A03G00136390"/>
</dbReference>
<dbReference type="Gramene" id="TraesSTA1B03G00340100.1">
    <property type="protein sequence ID" value="TraesSTA1B03G00340100.1"/>
    <property type="gene ID" value="TraesSTA1B03G00340100"/>
</dbReference>
<dbReference type="Gramene" id="TraesSTA1D03G00529750.1">
    <property type="protein sequence ID" value="TraesSTA1D03G00529750.1"/>
    <property type="gene ID" value="TraesSTA1D03G00529750"/>
</dbReference>
<dbReference type="Gramene" id="TraesSYM1A03G00139360.1">
    <property type="protein sequence ID" value="TraesSYM1A03G00139360.1"/>
    <property type="gene ID" value="TraesSYM1A03G00139360"/>
</dbReference>
<dbReference type="Gramene" id="TraesSYM1A03G00139360.2">
    <property type="protein sequence ID" value="TraesSYM1A03G00139360.2"/>
    <property type="gene ID" value="TraesSYM1A03G00139360"/>
</dbReference>
<dbReference type="Gramene" id="TraesSYM1B03G00348430.1">
    <property type="protein sequence ID" value="TraesSYM1B03G00348430.1"/>
    <property type="gene ID" value="TraesSYM1B03G00348430"/>
</dbReference>
<dbReference type="Gramene" id="TraesSYM1D03G00537540.1">
    <property type="protein sequence ID" value="TraesSYM1D03G00537540.1"/>
    <property type="gene ID" value="TraesSYM1D03G00537540"/>
</dbReference>
<dbReference type="Gramene" id="TraesWEE_scaffold_007631_01G000200.1">
    <property type="protein sequence ID" value="TraesWEE_scaffold_007631_01G000200.1"/>
    <property type="gene ID" value="TraesWEE_scaffold_007631_01G000200"/>
</dbReference>
<dbReference type="Gramene" id="TraesWEE_scaffold_098495_01G000200.1">
    <property type="protein sequence ID" value="TraesWEE_scaffold_098495_01G000200.1"/>
    <property type="gene ID" value="TraesWEE_scaffold_098495_01G000200"/>
</dbReference>
<dbReference type="Gramene" id="TraesWEE_scaffold_119188_01G000100.1">
    <property type="protein sequence ID" value="TraesWEE_scaffold_119188_01G000100.1"/>
    <property type="gene ID" value="TraesWEE_scaffold_119188_01G000100"/>
</dbReference>
<dbReference type="eggNOG" id="KOG1375">
    <property type="taxonomic scope" value="Eukaryota"/>
</dbReference>
<dbReference type="HOGENOM" id="CLU_015718_1_1_1"/>
<dbReference type="OMA" id="LERINXQ"/>
<dbReference type="OrthoDB" id="732292at2759"/>
<dbReference type="Proteomes" id="UP000019116">
    <property type="component" value="Chromosome 1A"/>
</dbReference>
<dbReference type="Proteomes" id="UP000019116">
    <property type="component" value="Chromosome 1B"/>
</dbReference>
<dbReference type="Proteomes" id="UP000019116">
    <property type="component" value="Chromosome 1D"/>
</dbReference>
<dbReference type="GO" id="GO:0005737">
    <property type="term" value="C:cytoplasm"/>
    <property type="evidence" value="ECO:0000318"/>
    <property type="project" value="GO_Central"/>
</dbReference>
<dbReference type="GO" id="GO:0005874">
    <property type="term" value="C:microtubule"/>
    <property type="evidence" value="ECO:0000318"/>
    <property type="project" value="GO_Central"/>
</dbReference>
<dbReference type="GO" id="GO:0005525">
    <property type="term" value="F:GTP binding"/>
    <property type="evidence" value="ECO:0000318"/>
    <property type="project" value="GO_Central"/>
</dbReference>
<dbReference type="GO" id="GO:0003924">
    <property type="term" value="F:GTPase activity"/>
    <property type="evidence" value="ECO:0007669"/>
    <property type="project" value="InterPro"/>
</dbReference>
<dbReference type="GO" id="GO:0046872">
    <property type="term" value="F:metal ion binding"/>
    <property type="evidence" value="ECO:0007669"/>
    <property type="project" value="UniProtKB-KW"/>
</dbReference>
<dbReference type="GO" id="GO:0005200">
    <property type="term" value="F:structural constituent of cytoskeleton"/>
    <property type="evidence" value="ECO:0000318"/>
    <property type="project" value="GO_Central"/>
</dbReference>
<dbReference type="GO" id="GO:0000226">
    <property type="term" value="P:microtubule cytoskeleton organization"/>
    <property type="evidence" value="ECO:0000318"/>
    <property type="project" value="GO_Central"/>
</dbReference>
<dbReference type="GO" id="GO:0000278">
    <property type="term" value="P:mitotic cell cycle"/>
    <property type="evidence" value="ECO:0000318"/>
    <property type="project" value="GO_Central"/>
</dbReference>
<dbReference type="CDD" id="cd02187">
    <property type="entry name" value="beta_tubulin"/>
    <property type="match status" value="1"/>
</dbReference>
<dbReference type="FunFam" id="1.10.287.600:FF:000002">
    <property type="entry name" value="Tubulin beta chain"/>
    <property type="match status" value="1"/>
</dbReference>
<dbReference type="FunFam" id="3.30.1330.20:FF:000002">
    <property type="entry name" value="Tubulin beta chain"/>
    <property type="match status" value="1"/>
</dbReference>
<dbReference type="FunFam" id="3.40.50.1440:FF:000005">
    <property type="entry name" value="Tubulin beta chain"/>
    <property type="match status" value="1"/>
</dbReference>
<dbReference type="Gene3D" id="1.10.287.600">
    <property type="entry name" value="Helix hairpin bin"/>
    <property type="match status" value="1"/>
</dbReference>
<dbReference type="Gene3D" id="3.30.1330.20">
    <property type="entry name" value="Tubulin/FtsZ, C-terminal domain"/>
    <property type="match status" value="1"/>
</dbReference>
<dbReference type="Gene3D" id="3.40.50.1440">
    <property type="entry name" value="Tubulin/FtsZ, GTPase domain"/>
    <property type="match status" value="1"/>
</dbReference>
<dbReference type="InterPro" id="IPR013838">
    <property type="entry name" value="Beta-tubulin_BS"/>
</dbReference>
<dbReference type="InterPro" id="IPR002453">
    <property type="entry name" value="Beta_tubulin"/>
</dbReference>
<dbReference type="InterPro" id="IPR008280">
    <property type="entry name" value="Tub_FtsZ_C"/>
</dbReference>
<dbReference type="InterPro" id="IPR000217">
    <property type="entry name" value="Tubulin"/>
</dbReference>
<dbReference type="InterPro" id="IPR037103">
    <property type="entry name" value="Tubulin/FtsZ-like_C"/>
</dbReference>
<dbReference type="InterPro" id="IPR018316">
    <property type="entry name" value="Tubulin/FtsZ_2-layer-sand-dom"/>
</dbReference>
<dbReference type="InterPro" id="IPR036525">
    <property type="entry name" value="Tubulin/FtsZ_GTPase_sf"/>
</dbReference>
<dbReference type="InterPro" id="IPR023123">
    <property type="entry name" value="Tubulin_C"/>
</dbReference>
<dbReference type="InterPro" id="IPR017975">
    <property type="entry name" value="Tubulin_CS"/>
</dbReference>
<dbReference type="InterPro" id="IPR003008">
    <property type="entry name" value="Tubulin_FtsZ_GTPase"/>
</dbReference>
<dbReference type="PANTHER" id="PTHR11588">
    <property type="entry name" value="TUBULIN"/>
    <property type="match status" value="1"/>
</dbReference>
<dbReference type="Pfam" id="PF00091">
    <property type="entry name" value="Tubulin"/>
    <property type="match status" value="1"/>
</dbReference>
<dbReference type="Pfam" id="PF03953">
    <property type="entry name" value="Tubulin_C"/>
    <property type="match status" value="1"/>
</dbReference>
<dbReference type="PRINTS" id="PR01163">
    <property type="entry name" value="BETATUBULIN"/>
</dbReference>
<dbReference type="PRINTS" id="PR01161">
    <property type="entry name" value="TUBULIN"/>
</dbReference>
<dbReference type="SMART" id="SM00864">
    <property type="entry name" value="Tubulin"/>
    <property type="match status" value="1"/>
</dbReference>
<dbReference type="SMART" id="SM00865">
    <property type="entry name" value="Tubulin_C"/>
    <property type="match status" value="1"/>
</dbReference>
<dbReference type="SUPFAM" id="SSF55307">
    <property type="entry name" value="Tubulin C-terminal domain-like"/>
    <property type="match status" value="1"/>
</dbReference>
<dbReference type="SUPFAM" id="SSF52490">
    <property type="entry name" value="Tubulin nucleotide-binding domain-like"/>
    <property type="match status" value="1"/>
</dbReference>
<dbReference type="PROSITE" id="PS00227">
    <property type="entry name" value="TUBULIN"/>
    <property type="match status" value="1"/>
</dbReference>
<dbReference type="PROSITE" id="PS00228">
    <property type="entry name" value="TUBULIN_B_AUTOREG"/>
    <property type="match status" value="1"/>
</dbReference>
<gene>
    <name type="primary">TUBB5</name>
</gene>
<keyword id="KW-0963">Cytoplasm</keyword>
<keyword id="KW-0206">Cytoskeleton</keyword>
<keyword id="KW-0342">GTP-binding</keyword>
<keyword id="KW-0460">Magnesium</keyword>
<keyword id="KW-0479">Metal-binding</keyword>
<keyword id="KW-0493">Microtubule</keyword>
<keyword id="KW-0547">Nucleotide-binding</keyword>
<keyword id="KW-1185">Reference proteome</keyword>
<sequence length="447" mass="50309">MREILHIQGGQCGNQIGSKFWEVVCDEHGIDPTGRYVGTSDLQLERVNVYYNEASCGRFVPRAVLMDLEPGTMDSVRTGPYGQIFRPDNFVFGQSGAGNNWAKGHYTEGAELIDSVLDVVRKEAENCDCLQGFQVCHSLGGGTGSGMGTLLISKIREEYPDRMMLTFSVFPSPKVSDTVVEPYNATLSVHQLVENADECMVLDNEALYDICFRTLKLTTPSFGDLNHLISATMSGVTCCLRFPGQLNSDLRKLAVNLIPFPRLHFFMVGFAPLTSRGSQMYRSLTVPELTQQMWDSKNMMCAADPRHGRYLTASAMFRGKMSTKEVDEQMINVQNKNSSYFVEWIPNNVKSSVCDIAPRGLSMASTFIGNSTSIQEMFRRVSEQFTAMFRRKAFLHWYTGEGMDEMEFTEAESNMNDLVAEYQQYQDATADEEEELYEDEDDADLQE</sequence>
<feature type="chain" id="PRO_0000048389" description="Tubulin beta-5 chain">
    <location>
        <begin position="1"/>
        <end position="447"/>
    </location>
</feature>
<feature type="binding site" evidence="2">
    <location>
        <position position="11"/>
    </location>
    <ligand>
        <name>GTP</name>
        <dbReference type="ChEBI" id="CHEBI:37565"/>
    </ligand>
</feature>
<feature type="binding site" evidence="1">
    <location>
        <position position="69"/>
    </location>
    <ligand>
        <name>GTP</name>
        <dbReference type="ChEBI" id="CHEBI:37565"/>
    </ligand>
</feature>
<feature type="binding site" evidence="1">
    <location>
        <position position="69"/>
    </location>
    <ligand>
        <name>Mg(2+)</name>
        <dbReference type="ChEBI" id="CHEBI:18420"/>
    </ligand>
</feature>
<feature type="binding site" evidence="2">
    <location>
        <position position="138"/>
    </location>
    <ligand>
        <name>GTP</name>
        <dbReference type="ChEBI" id="CHEBI:37565"/>
    </ligand>
</feature>
<feature type="binding site" evidence="2">
    <location>
        <position position="142"/>
    </location>
    <ligand>
        <name>GTP</name>
        <dbReference type="ChEBI" id="CHEBI:37565"/>
    </ligand>
</feature>
<feature type="binding site" evidence="2">
    <location>
        <position position="143"/>
    </location>
    <ligand>
        <name>GTP</name>
        <dbReference type="ChEBI" id="CHEBI:37565"/>
    </ligand>
</feature>
<feature type="binding site" evidence="2">
    <location>
        <position position="144"/>
    </location>
    <ligand>
        <name>GTP</name>
        <dbReference type="ChEBI" id="CHEBI:37565"/>
    </ligand>
</feature>
<feature type="binding site" evidence="2">
    <location>
        <position position="204"/>
    </location>
    <ligand>
        <name>GTP</name>
        <dbReference type="ChEBI" id="CHEBI:37565"/>
    </ligand>
</feature>
<feature type="binding site" evidence="2">
    <location>
        <position position="226"/>
    </location>
    <ligand>
        <name>GTP</name>
        <dbReference type="ChEBI" id="CHEBI:37565"/>
    </ligand>
</feature>
<organism>
    <name type="scientific">Triticum aestivum</name>
    <name type="common">Wheat</name>
    <dbReference type="NCBI Taxonomy" id="4565"/>
    <lineage>
        <taxon>Eukaryota</taxon>
        <taxon>Viridiplantae</taxon>
        <taxon>Streptophyta</taxon>
        <taxon>Embryophyta</taxon>
        <taxon>Tracheophyta</taxon>
        <taxon>Spermatophyta</taxon>
        <taxon>Magnoliopsida</taxon>
        <taxon>Liliopsida</taxon>
        <taxon>Poales</taxon>
        <taxon>Poaceae</taxon>
        <taxon>BOP clade</taxon>
        <taxon>Pooideae</taxon>
        <taxon>Triticodae</taxon>
        <taxon>Triticeae</taxon>
        <taxon>Triticinae</taxon>
        <taxon>Triticum</taxon>
    </lineage>
</organism>
<comment type="function">
    <text>Tubulin is the major constituent of microtubules, a cylinder consisting of laterally associated linear protofilaments composed of alpha- and beta-tubulin heterodimers. Microtubules grow by the addition of GTP-tubulin dimers to the microtubule end, where a stabilizing cap forms. Below the cap, tubulin dimers are in GDP-bound state, owing to GTPase activity of alpha-tubulin.</text>
</comment>
<comment type="cofactor">
    <cofactor evidence="1">
        <name>Mg(2+)</name>
        <dbReference type="ChEBI" id="CHEBI:18420"/>
    </cofactor>
</comment>
<comment type="subunit">
    <text>Dimer of alpha and beta chains. A typical microtubule is a hollow water-filled tube with an outer diameter of 25 nm and an inner diameter of 15 nM. Alpha-beta heterodimers associate head-to-tail to form protofilaments running lengthwise along the microtubule wall with the beta-tubulin subunit facing the microtubule plus end conferring a structural polarity. Microtubules usually have 13 protofilaments but different protofilament numbers can be found in some organisms and specialized cells.</text>
</comment>
<comment type="subcellular location">
    <subcellularLocation>
        <location>Cytoplasm</location>
        <location>Cytoskeleton</location>
    </subcellularLocation>
</comment>
<comment type="similarity">
    <text evidence="3">Belongs to the tubulin family.</text>
</comment>